<name>GLGB_HAEI8</name>
<keyword id="KW-0119">Carbohydrate metabolism</keyword>
<keyword id="KW-0320">Glycogen biosynthesis</keyword>
<keyword id="KW-0321">Glycogen metabolism</keyword>
<keyword id="KW-0328">Glycosyltransferase</keyword>
<keyword id="KW-0808">Transferase</keyword>
<comment type="function">
    <text evidence="1">Catalyzes the formation of the alpha-1,6-glucosidic linkages in glycogen by scission of a 1,4-alpha-linked oligosaccharide from growing alpha-1,4-glucan chains and the subsequent attachment of the oligosaccharide to the alpha-1,6 position.</text>
</comment>
<comment type="catalytic activity">
    <reaction evidence="1">
        <text>Transfers a segment of a (1-&gt;4)-alpha-D-glucan chain to a primary hydroxy group in a similar glucan chain.</text>
        <dbReference type="EC" id="2.4.1.18"/>
    </reaction>
</comment>
<comment type="pathway">
    <text evidence="1">Glycan biosynthesis; glycogen biosynthesis.</text>
</comment>
<comment type="subunit">
    <text evidence="1">Monomer.</text>
</comment>
<comment type="similarity">
    <text evidence="1">Belongs to the glycosyl hydrolase 13 family. GlgB subfamily.</text>
</comment>
<sequence length="730" mass="84010">MTTAVTQATIDGFFDASNGDPFATLGMHETEQGIEIRTLLPDANRMVVIERESGKEITELDCVDERGFFVGVIPNCRQFFAYQLQVFWGNEAQIIEDPYRFHPMIDDLEQWLLSEGSMLRPYEVLGAHFMECDGVSGVNFRLWAPNARRVSIVGDFNYWDGRRHPMRFHPKSGVWELFLPKASLGQLYKFELIDCYGNLRLKADPYAFSSQLRPDTASQISALPNVVEMTEQRRQANQANQPISIYEVHLGSWRRNLENNFWLDYDQIADELIPYVKEMGFTHIEFLPLSEFPFDGSWGYQPLGLYSPTSRFGSPEAFRRLVKRAHEAGINVILDWVPGHFPSDTHGLVAFDGTALYEHEDPREGYHQDWNTLIYNYGRNEVKNFLSSNALYWLERFGVDGIRMDAVASMIYRDYSRAEGEWIPNQYGGRENLEAIEFLKHTNWKIHSEMAGAISIAEESTSFAGVTHPSEDGGLGFNFKWNMGWMNDTLAYMKLDPIYRQYHHNKMTFGMVYQYSENFVLPLSHDEVVHGKYSLLGKMPGDTWQKFANLRAYYGYMWGYPGKKLLFMGNEFAQGREWNYEESLDWFLLDENIGGGWHKGVLKLVKDLNQIYQKNRPLFELDNSPEGFDWLVVDDAANSVFAFERRSSNGERIIVVSNFTPVPRHNYRIGVNVAGKYEEILNTDSMYYEGSNVGNFGCVASEKIESHGRENSISVSIPPLATVYLRLKAK</sequence>
<protein>
    <recommendedName>
        <fullName evidence="1">1,4-alpha-glucan branching enzyme GlgB</fullName>
        <ecNumber evidence="1">2.4.1.18</ecNumber>
    </recommendedName>
    <alternativeName>
        <fullName evidence="1">1,4-alpha-D-glucan:1,4-alpha-D-glucan 6-glucosyl-transferase</fullName>
    </alternativeName>
    <alternativeName>
        <fullName evidence="1">Alpha-(1-&gt;4)-glucan branching enzyme</fullName>
    </alternativeName>
    <alternativeName>
        <fullName evidence="1">Glycogen branching enzyme</fullName>
        <shortName evidence="1">BE</shortName>
    </alternativeName>
</protein>
<proteinExistence type="inferred from homology"/>
<evidence type="ECO:0000255" key="1">
    <source>
        <dbReference type="HAMAP-Rule" id="MF_00685"/>
    </source>
</evidence>
<dbReference type="EC" id="2.4.1.18" evidence="1"/>
<dbReference type="EMBL" id="CP000057">
    <property type="protein sequence ID" value="AAX88580.1"/>
    <property type="molecule type" value="Genomic_DNA"/>
</dbReference>
<dbReference type="RefSeq" id="WP_011272644.1">
    <property type="nucleotide sequence ID" value="NC_007146.2"/>
</dbReference>
<dbReference type="SMR" id="Q4QK67"/>
<dbReference type="CAZy" id="CBM48">
    <property type="family name" value="Carbohydrate-Binding Module Family 48"/>
</dbReference>
<dbReference type="CAZy" id="GH13">
    <property type="family name" value="Glycoside Hydrolase Family 13"/>
</dbReference>
<dbReference type="GeneID" id="93220521"/>
<dbReference type="KEGG" id="hit:NTHI1809"/>
<dbReference type="HOGENOM" id="CLU_004245_3_2_6"/>
<dbReference type="UniPathway" id="UPA00164"/>
<dbReference type="Proteomes" id="UP000002525">
    <property type="component" value="Chromosome"/>
</dbReference>
<dbReference type="GO" id="GO:0005829">
    <property type="term" value="C:cytosol"/>
    <property type="evidence" value="ECO:0007669"/>
    <property type="project" value="TreeGrafter"/>
</dbReference>
<dbReference type="GO" id="GO:0003844">
    <property type="term" value="F:1,4-alpha-glucan branching enzyme activity"/>
    <property type="evidence" value="ECO:0007669"/>
    <property type="project" value="UniProtKB-UniRule"/>
</dbReference>
<dbReference type="GO" id="GO:0043169">
    <property type="term" value="F:cation binding"/>
    <property type="evidence" value="ECO:0007669"/>
    <property type="project" value="InterPro"/>
</dbReference>
<dbReference type="GO" id="GO:0004553">
    <property type="term" value="F:hydrolase activity, hydrolyzing O-glycosyl compounds"/>
    <property type="evidence" value="ECO:0007669"/>
    <property type="project" value="InterPro"/>
</dbReference>
<dbReference type="GO" id="GO:0005978">
    <property type="term" value="P:glycogen biosynthetic process"/>
    <property type="evidence" value="ECO:0007669"/>
    <property type="project" value="UniProtKB-UniRule"/>
</dbReference>
<dbReference type="CDD" id="cd11322">
    <property type="entry name" value="AmyAc_Glg_BE"/>
    <property type="match status" value="1"/>
</dbReference>
<dbReference type="CDD" id="cd02855">
    <property type="entry name" value="E_set_GBE_prok_N"/>
    <property type="match status" value="1"/>
</dbReference>
<dbReference type="FunFam" id="2.60.40.10:FF:000169">
    <property type="entry name" value="1,4-alpha-glucan branching enzyme GlgB"/>
    <property type="match status" value="1"/>
</dbReference>
<dbReference type="FunFam" id="2.60.40.1180:FF:000002">
    <property type="entry name" value="1,4-alpha-glucan branching enzyme GlgB"/>
    <property type="match status" value="1"/>
</dbReference>
<dbReference type="FunFam" id="3.20.20.80:FF:000003">
    <property type="entry name" value="1,4-alpha-glucan branching enzyme GlgB"/>
    <property type="match status" value="1"/>
</dbReference>
<dbReference type="Gene3D" id="3.20.20.80">
    <property type="entry name" value="Glycosidases"/>
    <property type="match status" value="1"/>
</dbReference>
<dbReference type="Gene3D" id="2.60.40.1180">
    <property type="entry name" value="Golgi alpha-mannosidase II"/>
    <property type="match status" value="1"/>
</dbReference>
<dbReference type="Gene3D" id="2.60.40.10">
    <property type="entry name" value="Immunoglobulins"/>
    <property type="match status" value="1"/>
</dbReference>
<dbReference type="HAMAP" id="MF_00685">
    <property type="entry name" value="GlgB"/>
    <property type="match status" value="1"/>
</dbReference>
<dbReference type="InterPro" id="IPR006048">
    <property type="entry name" value="A-amylase/branching_C"/>
</dbReference>
<dbReference type="InterPro" id="IPR037439">
    <property type="entry name" value="Branching_enzy"/>
</dbReference>
<dbReference type="InterPro" id="IPR006407">
    <property type="entry name" value="GlgB"/>
</dbReference>
<dbReference type="InterPro" id="IPR054169">
    <property type="entry name" value="GlgB_N"/>
</dbReference>
<dbReference type="InterPro" id="IPR044143">
    <property type="entry name" value="GlgB_N_E_set_prok"/>
</dbReference>
<dbReference type="InterPro" id="IPR006047">
    <property type="entry name" value="Glyco_hydro_13_cat_dom"/>
</dbReference>
<dbReference type="InterPro" id="IPR004193">
    <property type="entry name" value="Glyco_hydro_13_N"/>
</dbReference>
<dbReference type="InterPro" id="IPR013780">
    <property type="entry name" value="Glyco_hydro_b"/>
</dbReference>
<dbReference type="InterPro" id="IPR017853">
    <property type="entry name" value="Glycoside_hydrolase_SF"/>
</dbReference>
<dbReference type="InterPro" id="IPR013783">
    <property type="entry name" value="Ig-like_fold"/>
</dbReference>
<dbReference type="InterPro" id="IPR014756">
    <property type="entry name" value="Ig_E-set"/>
</dbReference>
<dbReference type="NCBIfam" id="TIGR01515">
    <property type="entry name" value="branching_enzym"/>
    <property type="match status" value="1"/>
</dbReference>
<dbReference type="NCBIfam" id="NF003811">
    <property type="entry name" value="PRK05402.1"/>
    <property type="match status" value="1"/>
</dbReference>
<dbReference type="NCBIfam" id="NF008967">
    <property type="entry name" value="PRK12313.1"/>
    <property type="match status" value="1"/>
</dbReference>
<dbReference type="PANTHER" id="PTHR43651">
    <property type="entry name" value="1,4-ALPHA-GLUCAN-BRANCHING ENZYME"/>
    <property type="match status" value="1"/>
</dbReference>
<dbReference type="PANTHER" id="PTHR43651:SF3">
    <property type="entry name" value="1,4-ALPHA-GLUCAN-BRANCHING ENZYME"/>
    <property type="match status" value="1"/>
</dbReference>
<dbReference type="Pfam" id="PF00128">
    <property type="entry name" value="Alpha-amylase"/>
    <property type="match status" value="1"/>
</dbReference>
<dbReference type="Pfam" id="PF02806">
    <property type="entry name" value="Alpha-amylase_C"/>
    <property type="match status" value="1"/>
</dbReference>
<dbReference type="Pfam" id="PF02922">
    <property type="entry name" value="CBM_48"/>
    <property type="match status" value="1"/>
</dbReference>
<dbReference type="Pfam" id="PF22019">
    <property type="entry name" value="GlgB_N"/>
    <property type="match status" value="1"/>
</dbReference>
<dbReference type="PIRSF" id="PIRSF000463">
    <property type="entry name" value="GlgB"/>
    <property type="match status" value="1"/>
</dbReference>
<dbReference type="SMART" id="SM00642">
    <property type="entry name" value="Aamy"/>
    <property type="match status" value="1"/>
</dbReference>
<dbReference type="SUPFAM" id="SSF51445">
    <property type="entry name" value="(Trans)glycosidases"/>
    <property type="match status" value="1"/>
</dbReference>
<dbReference type="SUPFAM" id="SSF81296">
    <property type="entry name" value="E set domains"/>
    <property type="match status" value="2"/>
</dbReference>
<dbReference type="SUPFAM" id="SSF51011">
    <property type="entry name" value="Glycosyl hydrolase domain"/>
    <property type="match status" value="1"/>
</dbReference>
<accession>Q4QK67</accession>
<gene>
    <name evidence="1" type="primary">glgB</name>
    <name type="ordered locus">NTHI1809</name>
</gene>
<reference key="1">
    <citation type="journal article" date="2005" name="J. Bacteriol.">
        <title>Genomic sequence of an otitis media isolate of nontypeable Haemophilus influenzae: comparative study with H. influenzae serotype d, strain KW20.</title>
        <authorList>
            <person name="Harrison A."/>
            <person name="Dyer D.W."/>
            <person name="Gillaspy A."/>
            <person name="Ray W.C."/>
            <person name="Mungur R."/>
            <person name="Carson M.B."/>
            <person name="Zhong H."/>
            <person name="Gipson J."/>
            <person name="Gipson M."/>
            <person name="Johnson L.S."/>
            <person name="Lewis L."/>
            <person name="Bakaletz L.O."/>
            <person name="Munson R.S. Jr."/>
        </authorList>
    </citation>
    <scope>NUCLEOTIDE SEQUENCE [LARGE SCALE GENOMIC DNA]</scope>
    <source>
        <strain>86-028NP</strain>
    </source>
</reference>
<organism>
    <name type="scientific">Haemophilus influenzae (strain 86-028NP)</name>
    <dbReference type="NCBI Taxonomy" id="281310"/>
    <lineage>
        <taxon>Bacteria</taxon>
        <taxon>Pseudomonadati</taxon>
        <taxon>Pseudomonadota</taxon>
        <taxon>Gammaproteobacteria</taxon>
        <taxon>Pasteurellales</taxon>
        <taxon>Pasteurellaceae</taxon>
        <taxon>Haemophilus</taxon>
    </lineage>
</organism>
<feature type="chain" id="PRO_0000260660" description="1,4-alpha-glucan branching enzyme GlgB">
    <location>
        <begin position="1"/>
        <end position="730"/>
    </location>
</feature>
<feature type="active site" description="Nucleophile" evidence="1">
    <location>
        <position position="405"/>
    </location>
</feature>
<feature type="active site" description="Proton donor" evidence="1">
    <location>
        <position position="458"/>
    </location>
</feature>